<keyword id="KW-0028">Amino-acid biosynthesis</keyword>
<keyword id="KW-0963">Cytoplasm</keyword>
<keyword id="KW-0413">Isomerase</keyword>
<keyword id="KW-0457">Lysine biosynthesis</keyword>
<organism>
    <name type="scientific">Desulfitobacterium hafniense (strain DSM 10664 / DCB-2)</name>
    <dbReference type="NCBI Taxonomy" id="272564"/>
    <lineage>
        <taxon>Bacteria</taxon>
        <taxon>Bacillati</taxon>
        <taxon>Bacillota</taxon>
        <taxon>Clostridia</taxon>
        <taxon>Eubacteriales</taxon>
        <taxon>Desulfitobacteriaceae</taxon>
        <taxon>Desulfitobacterium</taxon>
    </lineage>
</organism>
<dbReference type="EC" id="5.1.1.7" evidence="1"/>
<dbReference type="EMBL" id="CP001336">
    <property type="protein sequence ID" value="ACL21922.1"/>
    <property type="molecule type" value="Genomic_DNA"/>
</dbReference>
<dbReference type="RefSeq" id="WP_015944873.1">
    <property type="nucleotide sequence ID" value="NC_011830.1"/>
</dbReference>
<dbReference type="SMR" id="B8FSD4"/>
<dbReference type="KEGG" id="dhd:Dhaf_3907"/>
<dbReference type="HOGENOM" id="CLU_053306_3_0_9"/>
<dbReference type="UniPathway" id="UPA00034">
    <property type="reaction ID" value="UER00025"/>
</dbReference>
<dbReference type="Proteomes" id="UP000007726">
    <property type="component" value="Chromosome"/>
</dbReference>
<dbReference type="GO" id="GO:0005829">
    <property type="term" value="C:cytosol"/>
    <property type="evidence" value="ECO:0007669"/>
    <property type="project" value="TreeGrafter"/>
</dbReference>
<dbReference type="GO" id="GO:0008837">
    <property type="term" value="F:diaminopimelate epimerase activity"/>
    <property type="evidence" value="ECO:0007669"/>
    <property type="project" value="UniProtKB-UniRule"/>
</dbReference>
<dbReference type="GO" id="GO:0009089">
    <property type="term" value="P:lysine biosynthetic process via diaminopimelate"/>
    <property type="evidence" value="ECO:0007669"/>
    <property type="project" value="UniProtKB-UniRule"/>
</dbReference>
<dbReference type="FunFam" id="3.10.310.10:FF:000001">
    <property type="entry name" value="Diaminopimelate epimerase"/>
    <property type="match status" value="1"/>
</dbReference>
<dbReference type="FunFam" id="3.10.310.10:FF:000004">
    <property type="entry name" value="Diaminopimelate epimerase"/>
    <property type="match status" value="1"/>
</dbReference>
<dbReference type="Gene3D" id="3.10.310.10">
    <property type="entry name" value="Diaminopimelate Epimerase, Chain A, domain 1"/>
    <property type="match status" value="2"/>
</dbReference>
<dbReference type="HAMAP" id="MF_00197">
    <property type="entry name" value="DAP_epimerase"/>
    <property type="match status" value="1"/>
</dbReference>
<dbReference type="InterPro" id="IPR018510">
    <property type="entry name" value="DAP_epimerase_AS"/>
</dbReference>
<dbReference type="InterPro" id="IPR001653">
    <property type="entry name" value="DAP_epimerase_DapF"/>
</dbReference>
<dbReference type="NCBIfam" id="TIGR00652">
    <property type="entry name" value="DapF"/>
    <property type="match status" value="1"/>
</dbReference>
<dbReference type="PANTHER" id="PTHR31689:SF0">
    <property type="entry name" value="DIAMINOPIMELATE EPIMERASE"/>
    <property type="match status" value="1"/>
</dbReference>
<dbReference type="PANTHER" id="PTHR31689">
    <property type="entry name" value="DIAMINOPIMELATE EPIMERASE, CHLOROPLASTIC"/>
    <property type="match status" value="1"/>
</dbReference>
<dbReference type="Pfam" id="PF01678">
    <property type="entry name" value="DAP_epimerase"/>
    <property type="match status" value="2"/>
</dbReference>
<dbReference type="SUPFAM" id="SSF54506">
    <property type="entry name" value="Diaminopimelate epimerase-like"/>
    <property type="match status" value="1"/>
</dbReference>
<dbReference type="PROSITE" id="PS01326">
    <property type="entry name" value="DAP_EPIMERASE"/>
    <property type="match status" value="1"/>
</dbReference>
<proteinExistence type="inferred from homology"/>
<accession>B8FSD4</accession>
<reference key="1">
    <citation type="journal article" date="2012" name="BMC Microbiol.">
        <title>Genome sequence of Desulfitobacterium hafniense DCB-2, a Gram-positive anaerobe capable of dehalogenation and metal reduction.</title>
        <authorList>
            <person name="Kim S.H."/>
            <person name="Harzman C."/>
            <person name="Davis J.K."/>
            <person name="Hutcheson R."/>
            <person name="Broderick J.B."/>
            <person name="Marsh T.L."/>
            <person name="Tiedje J.M."/>
        </authorList>
    </citation>
    <scope>NUCLEOTIDE SEQUENCE [LARGE SCALE GENOMIC DNA]</scope>
    <source>
        <strain>DSM 10664 / DCB-2</strain>
    </source>
</reference>
<sequence>MEIVKMHGLGNDFVFIDHFQGAPAELPDYPELARKLCHRQFGVGGDGLIMVLPSDKADARMRILNSDGSEPEMCGNGIRCFARYIYDQGYVSQNPLQVETLAGILTLQLSITGDQVTGVRVDMGEPILKSEQVPVLIQGDPVVGARLDVDGQEFEFTAVSMGNPHCVLFVEDYETLDFERIGPAIEKHPLFPRKTNVEFIIVNSPRELTMKVWERGAGPTLACGTGACASVVAAVLNGRTERKVTVHLPGGDLLIEWGEDNRVYMTGPAAYVFKGVLLEDALS</sequence>
<evidence type="ECO:0000255" key="1">
    <source>
        <dbReference type="HAMAP-Rule" id="MF_00197"/>
    </source>
</evidence>
<name>DAPF_DESHD</name>
<protein>
    <recommendedName>
        <fullName evidence="1">Diaminopimelate epimerase</fullName>
        <shortName evidence="1">DAP epimerase</shortName>
        <ecNumber evidence="1">5.1.1.7</ecNumber>
    </recommendedName>
    <alternativeName>
        <fullName evidence="1">PLP-independent amino acid racemase</fullName>
    </alternativeName>
</protein>
<gene>
    <name evidence="1" type="primary">dapF</name>
    <name type="ordered locus">Dhaf_3907</name>
</gene>
<feature type="chain" id="PRO_1000124411" description="Diaminopimelate epimerase">
    <location>
        <begin position="1"/>
        <end position="283"/>
    </location>
</feature>
<feature type="active site" description="Proton donor" evidence="1">
    <location>
        <position position="74"/>
    </location>
</feature>
<feature type="active site" description="Proton acceptor" evidence="1">
    <location>
        <position position="223"/>
    </location>
</feature>
<feature type="binding site" evidence="1">
    <location>
        <position position="11"/>
    </location>
    <ligand>
        <name>substrate</name>
    </ligand>
</feature>
<feature type="binding site" evidence="1">
    <location>
        <position position="65"/>
    </location>
    <ligand>
        <name>substrate</name>
    </ligand>
</feature>
<feature type="binding site" evidence="1">
    <location>
        <begin position="75"/>
        <end position="76"/>
    </location>
    <ligand>
        <name>substrate</name>
    </ligand>
</feature>
<feature type="binding site" evidence="1">
    <location>
        <position position="163"/>
    </location>
    <ligand>
        <name>substrate</name>
    </ligand>
</feature>
<feature type="binding site" evidence="1">
    <location>
        <position position="196"/>
    </location>
    <ligand>
        <name>substrate</name>
    </ligand>
</feature>
<feature type="binding site" evidence="1">
    <location>
        <begin position="214"/>
        <end position="215"/>
    </location>
    <ligand>
        <name>substrate</name>
    </ligand>
</feature>
<feature type="binding site" evidence="1">
    <location>
        <begin position="224"/>
        <end position="225"/>
    </location>
    <ligand>
        <name>substrate</name>
    </ligand>
</feature>
<feature type="site" description="Could be important to modulate the pK values of the two catalytic cysteine residues" evidence="1">
    <location>
        <position position="165"/>
    </location>
</feature>
<feature type="site" description="Could be important to modulate the pK values of the two catalytic cysteine residues" evidence="1">
    <location>
        <position position="214"/>
    </location>
</feature>
<comment type="function">
    <text evidence="1">Catalyzes the stereoinversion of LL-2,6-diaminopimelate (L,L-DAP) to meso-diaminopimelate (meso-DAP), a precursor of L-lysine and an essential component of the bacterial peptidoglycan.</text>
</comment>
<comment type="catalytic activity">
    <reaction evidence="1">
        <text>(2S,6S)-2,6-diaminopimelate = meso-2,6-diaminopimelate</text>
        <dbReference type="Rhea" id="RHEA:15393"/>
        <dbReference type="ChEBI" id="CHEBI:57609"/>
        <dbReference type="ChEBI" id="CHEBI:57791"/>
        <dbReference type="EC" id="5.1.1.7"/>
    </reaction>
</comment>
<comment type="pathway">
    <text evidence="1">Amino-acid biosynthesis; L-lysine biosynthesis via DAP pathway; DL-2,6-diaminopimelate from LL-2,6-diaminopimelate: step 1/1.</text>
</comment>
<comment type="subunit">
    <text evidence="1">Homodimer.</text>
</comment>
<comment type="subcellular location">
    <subcellularLocation>
        <location evidence="1">Cytoplasm</location>
    </subcellularLocation>
</comment>
<comment type="similarity">
    <text evidence="1">Belongs to the diaminopimelate epimerase family.</text>
</comment>